<sequence length="176" mass="18790">MSKVKKNDEILSEVLVDVNRVTKVVKGGRSFAFSAYVVVGDKAGRVGAGHGKAKEVNEARGKAKQAAKKRMMKVPLYQNRTIHHDVVGKSGAAKVILRRAKAGTGVIAGGSMRAIFDSLGVHDIVAKSIGSTNVYAMISATFDALNKLASPKSIAMRRDKKVNEISVKSADIQVNE</sequence>
<name>RS5_RICPU</name>
<proteinExistence type="inferred from homology"/>
<accession>C4K2G2</accession>
<evidence type="ECO:0000255" key="1">
    <source>
        <dbReference type="HAMAP-Rule" id="MF_01307"/>
    </source>
</evidence>
<evidence type="ECO:0000305" key="2"/>
<protein>
    <recommendedName>
        <fullName evidence="1">Small ribosomal subunit protein uS5</fullName>
    </recommendedName>
    <alternativeName>
        <fullName evidence="2">30S ribosomal protein S5</fullName>
    </alternativeName>
</protein>
<comment type="function">
    <text evidence="1">With S4 and S12 plays an important role in translational accuracy.</text>
</comment>
<comment type="function">
    <text evidence="1">Located at the back of the 30S subunit body where it stabilizes the conformation of the head with respect to the body.</text>
</comment>
<comment type="subunit">
    <text evidence="1">Part of the 30S ribosomal subunit. Contacts proteins S4 and S8.</text>
</comment>
<comment type="domain">
    <text>The N-terminal domain interacts with the head of the 30S subunit; the C-terminal domain interacts with the body and contacts protein S4. The interaction surface between S4 and S5 is involved in control of translational fidelity.</text>
</comment>
<comment type="similarity">
    <text evidence="1">Belongs to the universal ribosomal protein uS5 family.</text>
</comment>
<feature type="chain" id="PRO_1000214325" description="Small ribosomal subunit protein uS5">
    <location>
        <begin position="1"/>
        <end position="176"/>
    </location>
</feature>
<feature type="domain" description="S5 DRBM" evidence="1">
    <location>
        <begin position="11"/>
        <end position="74"/>
    </location>
</feature>
<keyword id="KW-0687">Ribonucleoprotein</keyword>
<keyword id="KW-0689">Ribosomal protein</keyword>
<keyword id="KW-0694">RNA-binding</keyword>
<keyword id="KW-0699">rRNA-binding</keyword>
<reference key="1">
    <citation type="journal article" date="2009" name="PLoS ONE">
        <title>Genome sequence of the endosymbiont Rickettsia peacockii and comparison with virulent Rickettsia rickettsii: identification of virulence factors.</title>
        <authorList>
            <person name="Felsheim R.F."/>
            <person name="Kurtti T.J."/>
            <person name="Munderloh U.G."/>
        </authorList>
    </citation>
    <scope>NUCLEOTIDE SEQUENCE [LARGE SCALE GENOMIC DNA]</scope>
    <source>
        <strain>Rustic</strain>
    </source>
</reference>
<gene>
    <name evidence="1" type="primary">rpsE</name>
    <name type="ordered locus">RPR_06145</name>
</gene>
<organism>
    <name type="scientific">Rickettsia peacockii (strain Rustic)</name>
    <dbReference type="NCBI Taxonomy" id="562019"/>
    <lineage>
        <taxon>Bacteria</taxon>
        <taxon>Pseudomonadati</taxon>
        <taxon>Pseudomonadota</taxon>
        <taxon>Alphaproteobacteria</taxon>
        <taxon>Rickettsiales</taxon>
        <taxon>Rickettsiaceae</taxon>
        <taxon>Rickettsieae</taxon>
        <taxon>Rickettsia</taxon>
        <taxon>spotted fever group</taxon>
    </lineage>
</organism>
<dbReference type="EMBL" id="CP001227">
    <property type="protein sequence ID" value="ACR47759.1"/>
    <property type="molecule type" value="Genomic_DNA"/>
</dbReference>
<dbReference type="RefSeq" id="WP_012736939.1">
    <property type="nucleotide sequence ID" value="NC_012730.1"/>
</dbReference>
<dbReference type="SMR" id="C4K2G2"/>
<dbReference type="KEGG" id="rpk:RPR_06145"/>
<dbReference type="HOGENOM" id="CLU_065898_2_2_5"/>
<dbReference type="Proteomes" id="UP000005015">
    <property type="component" value="Chromosome"/>
</dbReference>
<dbReference type="GO" id="GO:0015935">
    <property type="term" value="C:small ribosomal subunit"/>
    <property type="evidence" value="ECO:0007669"/>
    <property type="project" value="InterPro"/>
</dbReference>
<dbReference type="GO" id="GO:0019843">
    <property type="term" value="F:rRNA binding"/>
    <property type="evidence" value="ECO:0007669"/>
    <property type="project" value="UniProtKB-UniRule"/>
</dbReference>
<dbReference type="GO" id="GO:0003735">
    <property type="term" value="F:structural constituent of ribosome"/>
    <property type="evidence" value="ECO:0007669"/>
    <property type="project" value="InterPro"/>
</dbReference>
<dbReference type="GO" id="GO:0006412">
    <property type="term" value="P:translation"/>
    <property type="evidence" value="ECO:0007669"/>
    <property type="project" value="UniProtKB-UniRule"/>
</dbReference>
<dbReference type="FunFam" id="3.30.230.10:FF:000002">
    <property type="entry name" value="30S ribosomal protein S5"/>
    <property type="match status" value="1"/>
</dbReference>
<dbReference type="Gene3D" id="3.30.160.20">
    <property type="match status" value="1"/>
</dbReference>
<dbReference type="Gene3D" id="3.30.230.10">
    <property type="match status" value="1"/>
</dbReference>
<dbReference type="HAMAP" id="MF_01307_B">
    <property type="entry name" value="Ribosomal_uS5_B"/>
    <property type="match status" value="1"/>
</dbReference>
<dbReference type="InterPro" id="IPR020568">
    <property type="entry name" value="Ribosomal_Su5_D2-typ_SF"/>
</dbReference>
<dbReference type="InterPro" id="IPR000851">
    <property type="entry name" value="Ribosomal_uS5"/>
</dbReference>
<dbReference type="InterPro" id="IPR005712">
    <property type="entry name" value="Ribosomal_uS5_bac-type"/>
</dbReference>
<dbReference type="InterPro" id="IPR005324">
    <property type="entry name" value="Ribosomal_uS5_C"/>
</dbReference>
<dbReference type="InterPro" id="IPR013810">
    <property type="entry name" value="Ribosomal_uS5_N"/>
</dbReference>
<dbReference type="InterPro" id="IPR018192">
    <property type="entry name" value="Ribosomal_uS5_N_CS"/>
</dbReference>
<dbReference type="InterPro" id="IPR014721">
    <property type="entry name" value="Ribsml_uS5_D2-typ_fold_subgr"/>
</dbReference>
<dbReference type="NCBIfam" id="TIGR01021">
    <property type="entry name" value="rpsE_bact"/>
    <property type="match status" value="1"/>
</dbReference>
<dbReference type="PANTHER" id="PTHR48277">
    <property type="entry name" value="MITOCHONDRIAL RIBOSOMAL PROTEIN S5"/>
    <property type="match status" value="1"/>
</dbReference>
<dbReference type="PANTHER" id="PTHR48277:SF1">
    <property type="entry name" value="MITOCHONDRIAL RIBOSOMAL PROTEIN S5"/>
    <property type="match status" value="1"/>
</dbReference>
<dbReference type="Pfam" id="PF00333">
    <property type="entry name" value="Ribosomal_S5"/>
    <property type="match status" value="1"/>
</dbReference>
<dbReference type="Pfam" id="PF03719">
    <property type="entry name" value="Ribosomal_S5_C"/>
    <property type="match status" value="1"/>
</dbReference>
<dbReference type="SUPFAM" id="SSF54768">
    <property type="entry name" value="dsRNA-binding domain-like"/>
    <property type="match status" value="1"/>
</dbReference>
<dbReference type="SUPFAM" id="SSF54211">
    <property type="entry name" value="Ribosomal protein S5 domain 2-like"/>
    <property type="match status" value="1"/>
</dbReference>
<dbReference type="PROSITE" id="PS00585">
    <property type="entry name" value="RIBOSOMAL_S5"/>
    <property type="match status" value="1"/>
</dbReference>
<dbReference type="PROSITE" id="PS50881">
    <property type="entry name" value="S5_DSRBD"/>
    <property type="match status" value="1"/>
</dbReference>